<protein>
    <recommendedName>
        <fullName>Uncharacterized protein MJ0093</fullName>
    </recommendedName>
</protein>
<organism>
    <name type="scientific">Methanocaldococcus jannaschii (strain ATCC 43067 / DSM 2661 / JAL-1 / JCM 10045 / NBRC 100440)</name>
    <name type="common">Methanococcus jannaschii</name>
    <dbReference type="NCBI Taxonomy" id="243232"/>
    <lineage>
        <taxon>Archaea</taxon>
        <taxon>Methanobacteriati</taxon>
        <taxon>Methanobacteriota</taxon>
        <taxon>Methanomada group</taxon>
        <taxon>Methanococci</taxon>
        <taxon>Methanococcales</taxon>
        <taxon>Methanocaldococcaceae</taxon>
        <taxon>Methanocaldococcus</taxon>
    </lineage>
</organism>
<keyword id="KW-1185">Reference proteome</keyword>
<sequence>MENFNFKCYDIDEKEIPIPPGLPQSIIARLIEICNVKFDIREDEIYNVKYPVLIGKEEDLKEAKKYLELITEAKLTLRDIARLARRFKVKAKIYTDDEDLRYILDVLSNDIANKDYIEIVEEMPEGDKEVIEIGDKKIYVGI</sequence>
<proteinExistence type="predicted"/>
<dbReference type="EMBL" id="L77117">
    <property type="protein sequence ID" value="AAB98076.1"/>
    <property type="molecule type" value="Genomic_DNA"/>
</dbReference>
<dbReference type="PIR" id="E64311">
    <property type="entry name" value="E64311"/>
</dbReference>
<dbReference type="RefSeq" id="WP_010869585.1">
    <property type="nucleotide sequence ID" value="NC_000909.1"/>
</dbReference>
<dbReference type="SMR" id="Q57558"/>
<dbReference type="FunCoup" id="Q57558">
    <property type="interactions" value="6"/>
</dbReference>
<dbReference type="STRING" id="243232.MJ_0093"/>
<dbReference type="PaxDb" id="243232-MJ_0093"/>
<dbReference type="EnsemblBacteria" id="AAB98076">
    <property type="protein sequence ID" value="AAB98076"/>
    <property type="gene ID" value="MJ_0093"/>
</dbReference>
<dbReference type="GeneID" id="1450932"/>
<dbReference type="KEGG" id="mja:MJ_0093"/>
<dbReference type="eggNOG" id="arCOG05020">
    <property type="taxonomic scope" value="Archaea"/>
</dbReference>
<dbReference type="HOGENOM" id="CLU_1850644_0_0_2"/>
<dbReference type="InParanoid" id="Q57558"/>
<dbReference type="OrthoDB" id="64089at2157"/>
<dbReference type="Proteomes" id="UP000000805">
    <property type="component" value="Chromosome"/>
</dbReference>
<gene>
    <name type="ordered locus">MJ0093</name>
</gene>
<name>Y093_METJA</name>
<feature type="chain" id="PRO_0000106689" description="Uncharacterized protein MJ0093">
    <location>
        <begin position="1"/>
        <end position="142"/>
    </location>
</feature>
<reference key="1">
    <citation type="journal article" date="1996" name="Science">
        <title>Complete genome sequence of the methanogenic archaeon, Methanococcus jannaschii.</title>
        <authorList>
            <person name="Bult C.J."/>
            <person name="White O."/>
            <person name="Olsen G.J."/>
            <person name="Zhou L."/>
            <person name="Fleischmann R.D."/>
            <person name="Sutton G.G."/>
            <person name="Blake J.A."/>
            <person name="FitzGerald L.M."/>
            <person name="Clayton R.A."/>
            <person name="Gocayne J.D."/>
            <person name="Kerlavage A.R."/>
            <person name="Dougherty B.A."/>
            <person name="Tomb J.-F."/>
            <person name="Adams M.D."/>
            <person name="Reich C.I."/>
            <person name="Overbeek R."/>
            <person name="Kirkness E.F."/>
            <person name="Weinstock K.G."/>
            <person name="Merrick J.M."/>
            <person name="Glodek A."/>
            <person name="Scott J.L."/>
            <person name="Geoghagen N.S.M."/>
            <person name="Weidman J.F."/>
            <person name="Fuhrmann J.L."/>
            <person name="Nguyen D."/>
            <person name="Utterback T.R."/>
            <person name="Kelley J.M."/>
            <person name="Peterson J.D."/>
            <person name="Sadow P.W."/>
            <person name="Hanna M.C."/>
            <person name="Cotton M.D."/>
            <person name="Roberts K.M."/>
            <person name="Hurst M.A."/>
            <person name="Kaine B.P."/>
            <person name="Borodovsky M."/>
            <person name="Klenk H.-P."/>
            <person name="Fraser C.M."/>
            <person name="Smith H.O."/>
            <person name="Woese C.R."/>
            <person name="Venter J.C."/>
        </authorList>
    </citation>
    <scope>NUCLEOTIDE SEQUENCE [LARGE SCALE GENOMIC DNA]</scope>
    <source>
        <strain>ATCC 43067 / DSM 2661 / JAL-1 / JCM 10045 / NBRC 100440</strain>
    </source>
</reference>
<accession>Q57558</accession>